<proteinExistence type="inferred from homology"/>
<organism>
    <name type="scientific">Dictyostelium discoideum</name>
    <name type="common">Social amoeba</name>
    <dbReference type="NCBI Taxonomy" id="44689"/>
    <lineage>
        <taxon>Eukaryota</taxon>
        <taxon>Amoebozoa</taxon>
        <taxon>Evosea</taxon>
        <taxon>Eumycetozoa</taxon>
        <taxon>Dictyostelia</taxon>
        <taxon>Dictyosteliales</taxon>
        <taxon>Dictyosteliaceae</taxon>
        <taxon>Dictyostelium</taxon>
    </lineage>
</organism>
<comment type="catalytic activity">
    <reaction>
        <text>L-seryl-[protein] + ATP = O-phospho-L-seryl-[protein] + ADP + H(+)</text>
        <dbReference type="Rhea" id="RHEA:17989"/>
        <dbReference type="Rhea" id="RHEA-COMP:9863"/>
        <dbReference type="Rhea" id="RHEA-COMP:11604"/>
        <dbReference type="ChEBI" id="CHEBI:15378"/>
        <dbReference type="ChEBI" id="CHEBI:29999"/>
        <dbReference type="ChEBI" id="CHEBI:30616"/>
        <dbReference type="ChEBI" id="CHEBI:83421"/>
        <dbReference type="ChEBI" id="CHEBI:456216"/>
        <dbReference type="EC" id="2.7.12.1"/>
    </reaction>
</comment>
<comment type="catalytic activity">
    <reaction>
        <text>L-threonyl-[protein] + ATP = O-phospho-L-threonyl-[protein] + ADP + H(+)</text>
        <dbReference type="Rhea" id="RHEA:46608"/>
        <dbReference type="Rhea" id="RHEA-COMP:11060"/>
        <dbReference type="Rhea" id="RHEA-COMP:11605"/>
        <dbReference type="ChEBI" id="CHEBI:15378"/>
        <dbReference type="ChEBI" id="CHEBI:30013"/>
        <dbReference type="ChEBI" id="CHEBI:30616"/>
        <dbReference type="ChEBI" id="CHEBI:61977"/>
        <dbReference type="ChEBI" id="CHEBI:456216"/>
        <dbReference type="EC" id="2.7.12.1"/>
    </reaction>
</comment>
<comment type="catalytic activity">
    <reaction>
        <text>L-tyrosyl-[protein] + ATP = O-phospho-L-tyrosyl-[protein] + ADP + H(+)</text>
        <dbReference type="Rhea" id="RHEA:10596"/>
        <dbReference type="Rhea" id="RHEA-COMP:10136"/>
        <dbReference type="Rhea" id="RHEA-COMP:20101"/>
        <dbReference type="ChEBI" id="CHEBI:15378"/>
        <dbReference type="ChEBI" id="CHEBI:30616"/>
        <dbReference type="ChEBI" id="CHEBI:46858"/>
        <dbReference type="ChEBI" id="CHEBI:61978"/>
        <dbReference type="ChEBI" id="CHEBI:456216"/>
        <dbReference type="EC" id="2.7.12.1"/>
    </reaction>
</comment>
<comment type="similarity">
    <text evidence="4">Belongs to the protein kinase superfamily. CMGC Ser/Thr protein kinase family. MNB/DYRK subfamily.</text>
</comment>
<name>DYRK2_DICDI</name>
<evidence type="ECO:0000255" key="1">
    <source>
        <dbReference type="PROSITE-ProRule" id="PRU00159"/>
    </source>
</evidence>
<evidence type="ECO:0000255" key="2">
    <source>
        <dbReference type="PROSITE-ProRule" id="PRU10027"/>
    </source>
</evidence>
<evidence type="ECO:0000256" key="3">
    <source>
        <dbReference type="SAM" id="MobiDB-lite"/>
    </source>
</evidence>
<evidence type="ECO:0000305" key="4"/>
<reference key="1">
    <citation type="journal article" date="2005" name="Nature">
        <title>The genome of the social amoeba Dictyostelium discoideum.</title>
        <authorList>
            <person name="Eichinger L."/>
            <person name="Pachebat J.A."/>
            <person name="Gloeckner G."/>
            <person name="Rajandream M.A."/>
            <person name="Sucgang R."/>
            <person name="Berriman M."/>
            <person name="Song J."/>
            <person name="Olsen R."/>
            <person name="Szafranski K."/>
            <person name="Xu Q."/>
            <person name="Tunggal B."/>
            <person name="Kummerfeld S."/>
            <person name="Madera M."/>
            <person name="Konfortov B.A."/>
            <person name="Rivero F."/>
            <person name="Bankier A.T."/>
            <person name="Lehmann R."/>
            <person name="Hamlin N."/>
            <person name="Davies R."/>
            <person name="Gaudet P."/>
            <person name="Fey P."/>
            <person name="Pilcher K."/>
            <person name="Chen G."/>
            <person name="Saunders D."/>
            <person name="Sodergren E.J."/>
            <person name="Davis P."/>
            <person name="Kerhornou A."/>
            <person name="Nie X."/>
            <person name="Hall N."/>
            <person name="Anjard C."/>
            <person name="Hemphill L."/>
            <person name="Bason N."/>
            <person name="Farbrother P."/>
            <person name="Desany B."/>
            <person name="Just E."/>
            <person name="Morio T."/>
            <person name="Rost R."/>
            <person name="Churcher C.M."/>
            <person name="Cooper J."/>
            <person name="Haydock S."/>
            <person name="van Driessche N."/>
            <person name="Cronin A."/>
            <person name="Goodhead I."/>
            <person name="Muzny D.M."/>
            <person name="Mourier T."/>
            <person name="Pain A."/>
            <person name="Lu M."/>
            <person name="Harper D."/>
            <person name="Lindsay R."/>
            <person name="Hauser H."/>
            <person name="James K.D."/>
            <person name="Quiles M."/>
            <person name="Madan Babu M."/>
            <person name="Saito T."/>
            <person name="Buchrieser C."/>
            <person name="Wardroper A."/>
            <person name="Felder M."/>
            <person name="Thangavelu M."/>
            <person name="Johnson D."/>
            <person name="Knights A."/>
            <person name="Loulseged H."/>
            <person name="Mungall K.L."/>
            <person name="Oliver K."/>
            <person name="Price C."/>
            <person name="Quail M.A."/>
            <person name="Urushihara H."/>
            <person name="Hernandez J."/>
            <person name="Rabbinowitsch E."/>
            <person name="Steffen D."/>
            <person name="Sanders M."/>
            <person name="Ma J."/>
            <person name="Kohara Y."/>
            <person name="Sharp S."/>
            <person name="Simmonds M.N."/>
            <person name="Spiegler S."/>
            <person name="Tivey A."/>
            <person name="Sugano S."/>
            <person name="White B."/>
            <person name="Walker D."/>
            <person name="Woodward J.R."/>
            <person name="Winckler T."/>
            <person name="Tanaka Y."/>
            <person name="Shaulsky G."/>
            <person name="Schleicher M."/>
            <person name="Weinstock G.M."/>
            <person name="Rosenthal A."/>
            <person name="Cox E.C."/>
            <person name="Chisholm R.L."/>
            <person name="Gibbs R.A."/>
            <person name="Loomis W.F."/>
            <person name="Platzer M."/>
            <person name="Kay R.R."/>
            <person name="Williams J.G."/>
            <person name="Dear P.H."/>
            <person name="Noegel A.A."/>
            <person name="Barrell B.G."/>
            <person name="Kuspa A."/>
        </authorList>
    </citation>
    <scope>NUCLEOTIDE SEQUENCE [LARGE SCALE GENOMIC DNA]</scope>
    <source>
        <strain>AX4</strain>
    </source>
</reference>
<feature type="chain" id="PRO_0000362010" description="Probable serine/threonine-protein kinase dyrk2">
    <location>
        <begin position="1"/>
        <end position="915"/>
    </location>
</feature>
<feature type="domain" description="Protein kinase" evidence="1">
    <location>
        <begin position="605"/>
        <end position="902"/>
    </location>
</feature>
<feature type="region of interest" description="Disordered" evidence="3">
    <location>
        <begin position="51"/>
        <end position="119"/>
    </location>
</feature>
<feature type="region of interest" description="Disordered" evidence="3">
    <location>
        <begin position="132"/>
        <end position="334"/>
    </location>
</feature>
<feature type="region of interest" description="Disordered" evidence="3">
    <location>
        <begin position="349"/>
        <end position="533"/>
    </location>
</feature>
<feature type="compositionally biased region" description="Low complexity" evidence="3">
    <location>
        <begin position="51"/>
        <end position="79"/>
    </location>
</feature>
<feature type="compositionally biased region" description="Low complexity" evidence="3">
    <location>
        <begin position="108"/>
        <end position="119"/>
    </location>
</feature>
<feature type="compositionally biased region" description="Low complexity" evidence="3">
    <location>
        <begin position="170"/>
        <end position="185"/>
    </location>
</feature>
<feature type="compositionally biased region" description="Low complexity" evidence="3">
    <location>
        <begin position="196"/>
        <end position="218"/>
    </location>
</feature>
<feature type="compositionally biased region" description="Polar residues" evidence="3">
    <location>
        <begin position="234"/>
        <end position="260"/>
    </location>
</feature>
<feature type="compositionally biased region" description="Low complexity" evidence="3">
    <location>
        <begin position="261"/>
        <end position="287"/>
    </location>
</feature>
<feature type="compositionally biased region" description="Low complexity" evidence="3">
    <location>
        <begin position="300"/>
        <end position="333"/>
    </location>
</feature>
<feature type="compositionally biased region" description="Low complexity" evidence="3">
    <location>
        <begin position="352"/>
        <end position="364"/>
    </location>
</feature>
<feature type="compositionally biased region" description="Low complexity" evidence="3">
    <location>
        <begin position="379"/>
        <end position="391"/>
    </location>
</feature>
<feature type="compositionally biased region" description="Low complexity" evidence="3">
    <location>
        <begin position="399"/>
        <end position="425"/>
    </location>
</feature>
<feature type="compositionally biased region" description="Low complexity" evidence="3">
    <location>
        <begin position="433"/>
        <end position="533"/>
    </location>
</feature>
<feature type="active site" description="Proton acceptor" evidence="1 2">
    <location>
        <position position="731"/>
    </location>
</feature>
<feature type="binding site" evidence="1">
    <location>
        <begin position="611"/>
        <end position="619"/>
    </location>
    <ligand>
        <name>ATP</name>
        <dbReference type="ChEBI" id="CHEBI:30616"/>
    </ligand>
</feature>
<feature type="binding site" evidence="1">
    <location>
        <position position="634"/>
    </location>
    <ligand>
        <name>ATP</name>
        <dbReference type="ChEBI" id="CHEBI:30616"/>
    </ligand>
</feature>
<keyword id="KW-0067">ATP-binding</keyword>
<keyword id="KW-0418">Kinase</keyword>
<keyword id="KW-0547">Nucleotide-binding</keyword>
<keyword id="KW-1185">Reference proteome</keyword>
<keyword id="KW-0723">Serine/threonine-protein kinase</keyword>
<keyword id="KW-0808">Transferase</keyword>
<protein>
    <recommendedName>
        <fullName>Probable serine/threonine-protein kinase dyrk2</fullName>
        <ecNumber>2.7.12.1</ecNumber>
    </recommendedName>
    <alternativeName>
        <fullName>Dual specificity tyrosine-phosphorylation-regulated kinase 2</fullName>
    </alternativeName>
</protein>
<dbReference type="EC" id="2.7.12.1"/>
<dbReference type="EMBL" id="AAFI02000219">
    <property type="protein sequence ID" value="EAL60552.1"/>
    <property type="molecule type" value="Genomic_DNA"/>
</dbReference>
<dbReference type="RefSeq" id="XP_628965.1">
    <property type="nucleotide sequence ID" value="XM_628963.1"/>
</dbReference>
<dbReference type="SMR" id="Q54BC9"/>
<dbReference type="FunCoup" id="Q54BC9">
    <property type="interactions" value="177"/>
</dbReference>
<dbReference type="STRING" id="44689.Q54BC9"/>
<dbReference type="GlyGen" id="Q54BC9">
    <property type="glycosylation" value="3 sites"/>
</dbReference>
<dbReference type="PaxDb" id="44689-DDB0230102"/>
<dbReference type="EnsemblProtists" id="EAL60552">
    <property type="protein sequence ID" value="EAL60552"/>
    <property type="gene ID" value="DDB_G0293750"/>
</dbReference>
<dbReference type="GeneID" id="8629393"/>
<dbReference type="KEGG" id="ddi:DDB_G0293750"/>
<dbReference type="dictyBase" id="DDB_G0293750">
    <property type="gene designation" value="dyrk2"/>
</dbReference>
<dbReference type="VEuPathDB" id="AmoebaDB:DDB_G0293750"/>
<dbReference type="eggNOG" id="KOG0667">
    <property type="taxonomic scope" value="Eukaryota"/>
</dbReference>
<dbReference type="HOGENOM" id="CLU_318182_0_0_1"/>
<dbReference type="InParanoid" id="Q54BC9"/>
<dbReference type="OMA" id="TMAEQSE"/>
<dbReference type="Reactome" id="R-DDI-6804756">
    <property type="pathway name" value="Regulation of TP53 Activity through Phosphorylation"/>
</dbReference>
<dbReference type="PRO" id="PR:Q54BC9"/>
<dbReference type="Proteomes" id="UP000002195">
    <property type="component" value="Chromosome 6"/>
</dbReference>
<dbReference type="GO" id="GO:0005737">
    <property type="term" value="C:cytoplasm"/>
    <property type="evidence" value="ECO:0000250"/>
    <property type="project" value="dictyBase"/>
</dbReference>
<dbReference type="GO" id="GO:0005856">
    <property type="term" value="C:cytoskeleton"/>
    <property type="evidence" value="ECO:0000318"/>
    <property type="project" value="GO_Central"/>
</dbReference>
<dbReference type="GO" id="GO:0005524">
    <property type="term" value="F:ATP binding"/>
    <property type="evidence" value="ECO:0007669"/>
    <property type="project" value="UniProtKB-KW"/>
</dbReference>
<dbReference type="GO" id="GO:0106310">
    <property type="term" value="F:protein serine kinase activity"/>
    <property type="evidence" value="ECO:0007669"/>
    <property type="project" value="RHEA"/>
</dbReference>
<dbReference type="GO" id="GO:0004674">
    <property type="term" value="F:protein serine/threonine kinase activity"/>
    <property type="evidence" value="ECO:0000318"/>
    <property type="project" value="GO_Central"/>
</dbReference>
<dbReference type="GO" id="GO:0004712">
    <property type="term" value="F:protein serine/threonine/tyrosine kinase activity"/>
    <property type="evidence" value="ECO:0007669"/>
    <property type="project" value="UniProtKB-EC"/>
</dbReference>
<dbReference type="GO" id="GO:0004713">
    <property type="term" value="F:protein tyrosine kinase activity"/>
    <property type="evidence" value="ECO:0007669"/>
    <property type="project" value="RHEA"/>
</dbReference>
<dbReference type="CDD" id="cd14210">
    <property type="entry name" value="PKc_DYRK"/>
    <property type="match status" value="1"/>
</dbReference>
<dbReference type="Gene3D" id="3.30.10.30">
    <property type="entry name" value="DYRK"/>
    <property type="match status" value="1"/>
</dbReference>
<dbReference type="Gene3D" id="3.30.200.20">
    <property type="entry name" value="Phosphorylase Kinase, domain 1"/>
    <property type="match status" value="1"/>
</dbReference>
<dbReference type="Gene3D" id="1.10.510.10">
    <property type="entry name" value="Transferase(Phosphotransferase) domain 1"/>
    <property type="match status" value="1"/>
</dbReference>
<dbReference type="InterPro" id="IPR042521">
    <property type="entry name" value="DYRK"/>
</dbReference>
<dbReference type="InterPro" id="IPR011009">
    <property type="entry name" value="Kinase-like_dom_sf"/>
</dbReference>
<dbReference type="InterPro" id="IPR000719">
    <property type="entry name" value="Prot_kinase_dom"/>
</dbReference>
<dbReference type="InterPro" id="IPR008271">
    <property type="entry name" value="Ser/Thr_kinase_AS"/>
</dbReference>
<dbReference type="InterPro" id="IPR050494">
    <property type="entry name" value="Ser_Thr_dual-spec_kinase"/>
</dbReference>
<dbReference type="PANTHER" id="PTHR24058">
    <property type="entry name" value="DUAL SPECIFICITY PROTEIN KINASE"/>
    <property type="match status" value="1"/>
</dbReference>
<dbReference type="PANTHER" id="PTHR24058:SF22">
    <property type="entry name" value="DUAL SPECIFICITY TYROSINE-PHOSPHORYLATION-REGULATED KINASE 4"/>
    <property type="match status" value="1"/>
</dbReference>
<dbReference type="Pfam" id="PF00069">
    <property type="entry name" value="Pkinase"/>
    <property type="match status" value="1"/>
</dbReference>
<dbReference type="SMART" id="SM00220">
    <property type="entry name" value="S_TKc"/>
    <property type="match status" value="1"/>
</dbReference>
<dbReference type="SUPFAM" id="SSF56112">
    <property type="entry name" value="Protein kinase-like (PK-like)"/>
    <property type="match status" value="1"/>
</dbReference>
<dbReference type="PROSITE" id="PS50011">
    <property type="entry name" value="PROTEIN_KINASE_DOM"/>
    <property type="match status" value="1"/>
</dbReference>
<dbReference type="PROSITE" id="PS00108">
    <property type="entry name" value="PROTEIN_KINASE_ST"/>
    <property type="match status" value="1"/>
</dbReference>
<accession>Q54BC9</accession>
<gene>
    <name type="primary">dyrk2</name>
    <name type="ORF">DDB_G0293750</name>
</gene>
<sequence>MTSLHKQIIESHNNDITKLKSSMSTRAAARRSVCLSSMSYTLGADDVTPITSNTTPSNNNNNNNTTTTITTTTTTPTISPLKQSTTGSIIPKSILVTKSGSKEEPIVSSSKSSSNSSSINNNFNNLYSASTFSSSTKKVHERPSINPGFRKPREALLSGNSDSGIIKKPSSSSTSSSSSSSSTTSNIKAPIQISHSSNSGSSSSGGNNNNSDDNSGSSTIKHTAASLSKMKLSPSHTISDSPRSSTMKSRSVSISNGSLFSPTNTSVNNSNNNTSSNIKTPTKSSISENLDQNTPPPPSSSSTTKTPTATTTTTTTTTSSSSSTSTNTTPSKSSVDDVFARLANVSKPAIKSRSLSVSASLARVEQSPPTKDKGDKESSSSSSSSSSSFSSKFTKILRSSSKTPTPTSSNTTVQPSTTSLSASKISSRKDTKSLSSFSTTTTTTTLKSSSSSSSSSSSSSKSNIASSSSSSSNNLTNLLTQSQSISSTSTSTTTTPTSTSPTLASSMSVLSSPTSTTTTSTSTTSTTTTPTKSSCTIITPSIALKLYINDLTSAEQSEILDYPQIYFTGNTNKKTKFNSQLPNNGYDNDIGEYKVVERDHIAYRFEIVSILGQGSFCQVVKGYDYKTGEMVALKILRNQKRFHNQALTEIKILEYLKTNDPNSTASIVHLNNYFYFRNHLILTFELLSMNLYDFLKVNHFQGYNLNLVRRFGAQILTSLRFLSKRNIIHADLKPENILLKSPTKSGIKLIDFGSSCFENEQIFTYIQSRFYRSPEVILGTKYDKSIDIWSLGCILVEIFTGVPLFPGSDEPEQLACIMEVLGAPPKSVIDNSTRKDIFFEDDGTPKPVKNSTTGELYTIGTKSFKDSIRSGDEDFDNFILDCLKWEPSQRITAEQGLKHDWIIKVIAPTAPSTPS</sequence>